<accession>O69110</accession>
<keyword id="KW-0627">Porphyrin biosynthesis</keyword>
<keyword id="KW-0808">Transferase</keyword>
<comment type="function">
    <text evidence="1">Tetrapolymerization of the monopyrrole PBG into the hydroxymethylbilane pre-uroporphyrinogen in several discrete steps.</text>
</comment>
<comment type="catalytic activity">
    <reaction>
        <text>4 porphobilinogen + H2O = hydroxymethylbilane + 4 NH4(+)</text>
        <dbReference type="Rhea" id="RHEA:13185"/>
        <dbReference type="ChEBI" id="CHEBI:15377"/>
        <dbReference type="ChEBI" id="CHEBI:28938"/>
        <dbReference type="ChEBI" id="CHEBI:57845"/>
        <dbReference type="ChEBI" id="CHEBI:58126"/>
        <dbReference type="EC" id="2.5.1.61"/>
    </reaction>
</comment>
<comment type="cofactor">
    <cofactor evidence="1">
        <name>dipyrromethane</name>
        <dbReference type="ChEBI" id="CHEBI:60342"/>
    </cofactor>
    <text evidence="1">Binds 1 dipyrromethane group covalently.</text>
</comment>
<comment type="pathway">
    <text>Porphyrin-containing compound metabolism; protoporphyrin-IX biosynthesis; coproporphyrinogen-III from 5-aminolevulinate: step 2/4.</text>
</comment>
<comment type="subunit">
    <text evidence="1">Monomer.</text>
</comment>
<comment type="miscellaneous">
    <text evidence="1">The porphobilinogen subunits are added to the dipyrromethane group.</text>
</comment>
<comment type="similarity">
    <text evidence="2">Belongs to the HMBS family.</text>
</comment>
<reference key="1">
    <citation type="journal article" date="1999" name="Microbiology">
        <title>Organization of genes for tetrapyrrole biosynthesis in Gram-positive bacteria.</title>
        <authorList>
            <person name="Johansson P."/>
            <person name="Hederstedt L."/>
        </authorList>
    </citation>
    <scope>NUCLEOTIDE SEQUENCE [GENOMIC DNA]</scope>
    <source>
        <strain>ATCC 8244 / DSM 24 / IAM 1227 / JCM 2500 / NBRC 15307 / NCIMB 9368 / NCTC 6355 / NRRL B-394 / VKM B-506</strain>
    </source>
</reference>
<sequence length="324" mass="34903">MTKRTIVVGTRQSQLALTQTEQVIGDLKELCRAHGLPFEFEIKKIVTKGDRILDVTLSKIGGKGLFVKEIEQAMLDGEIDMAVHSMKDMPSVLPEGLINGGVPLRKDPRDALISRSGLHLHELPQGARVGTSTLRRSSQLLAYRPDLVLEPVRGNIDSRLRKLEEEGFDAIILAAAGLQRMGWENRVTAYLSADVCLPAVGQGALGIECRENDAELRDVLSLYNDPDTALTVAAERRFLAVLNGGCQVPIAAYANLERAGGQAPEEGGRAAASQAPAALRIRLTGMVGSADGRGYFEGECRREDPVAFGERIAGLLLAQGGRVT</sequence>
<organism>
    <name type="scientific">Paenibacillus macerans</name>
    <name type="common">Bacillus macerans</name>
    <dbReference type="NCBI Taxonomy" id="44252"/>
    <lineage>
        <taxon>Bacteria</taxon>
        <taxon>Bacillati</taxon>
        <taxon>Bacillota</taxon>
        <taxon>Bacilli</taxon>
        <taxon>Bacillales</taxon>
        <taxon>Paenibacillaceae</taxon>
        <taxon>Paenibacillus</taxon>
    </lineage>
</organism>
<dbReference type="EC" id="2.5.1.61"/>
<dbReference type="EMBL" id="AF064061">
    <property type="protein sequence ID" value="AAC18587.1"/>
    <property type="molecule type" value="Genomic_DNA"/>
</dbReference>
<dbReference type="SMR" id="O69110"/>
<dbReference type="STRING" id="44252.DJ90_5783"/>
<dbReference type="UniPathway" id="UPA00251">
    <property type="reaction ID" value="UER00319"/>
</dbReference>
<dbReference type="GO" id="GO:0005737">
    <property type="term" value="C:cytoplasm"/>
    <property type="evidence" value="ECO:0007669"/>
    <property type="project" value="TreeGrafter"/>
</dbReference>
<dbReference type="GO" id="GO:0004418">
    <property type="term" value="F:hydroxymethylbilane synthase activity"/>
    <property type="evidence" value="ECO:0007669"/>
    <property type="project" value="UniProtKB-UniRule"/>
</dbReference>
<dbReference type="GO" id="GO:0006782">
    <property type="term" value="P:protoporphyrinogen IX biosynthetic process"/>
    <property type="evidence" value="ECO:0007669"/>
    <property type="project" value="UniProtKB-UniRule"/>
</dbReference>
<dbReference type="CDD" id="cd13646">
    <property type="entry name" value="PBP2_EcHMBS_like"/>
    <property type="match status" value="1"/>
</dbReference>
<dbReference type="FunFam" id="3.40.190.10:FF:000004">
    <property type="entry name" value="Porphobilinogen deaminase"/>
    <property type="match status" value="1"/>
</dbReference>
<dbReference type="FunFam" id="3.40.190.10:FF:000005">
    <property type="entry name" value="Porphobilinogen deaminase"/>
    <property type="match status" value="1"/>
</dbReference>
<dbReference type="Gene3D" id="3.40.190.10">
    <property type="entry name" value="Periplasmic binding protein-like II"/>
    <property type="match status" value="2"/>
</dbReference>
<dbReference type="Gene3D" id="3.30.160.40">
    <property type="entry name" value="Porphobilinogen deaminase, C-terminal domain"/>
    <property type="match status" value="1"/>
</dbReference>
<dbReference type="HAMAP" id="MF_00260">
    <property type="entry name" value="Porphobil_deam"/>
    <property type="match status" value="1"/>
</dbReference>
<dbReference type="InterPro" id="IPR000860">
    <property type="entry name" value="HemC"/>
</dbReference>
<dbReference type="InterPro" id="IPR022419">
    <property type="entry name" value="Porphobilin_deaminase_cofac_BS"/>
</dbReference>
<dbReference type="InterPro" id="IPR022417">
    <property type="entry name" value="Porphobilin_deaminase_N"/>
</dbReference>
<dbReference type="InterPro" id="IPR022418">
    <property type="entry name" value="Porphobilinogen_deaminase_C"/>
</dbReference>
<dbReference type="InterPro" id="IPR036803">
    <property type="entry name" value="Porphobilinogen_deaminase_C_sf"/>
</dbReference>
<dbReference type="NCBIfam" id="TIGR00212">
    <property type="entry name" value="hemC"/>
    <property type="match status" value="1"/>
</dbReference>
<dbReference type="PANTHER" id="PTHR11557">
    <property type="entry name" value="PORPHOBILINOGEN DEAMINASE"/>
    <property type="match status" value="1"/>
</dbReference>
<dbReference type="PANTHER" id="PTHR11557:SF0">
    <property type="entry name" value="PORPHOBILINOGEN DEAMINASE"/>
    <property type="match status" value="1"/>
</dbReference>
<dbReference type="Pfam" id="PF01379">
    <property type="entry name" value="Porphobil_deam"/>
    <property type="match status" value="1"/>
</dbReference>
<dbReference type="Pfam" id="PF03900">
    <property type="entry name" value="Porphobil_deamC"/>
    <property type="match status" value="1"/>
</dbReference>
<dbReference type="PIRSF" id="PIRSF001438">
    <property type="entry name" value="4pyrrol_synth_OHMeBilane_synth"/>
    <property type="match status" value="1"/>
</dbReference>
<dbReference type="PRINTS" id="PR00151">
    <property type="entry name" value="PORPHBDMNASE"/>
</dbReference>
<dbReference type="SUPFAM" id="SSF53850">
    <property type="entry name" value="Periplasmic binding protein-like II"/>
    <property type="match status" value="1"/>
</dbReference>
<dbReference type="SUPFAM" id="SSF54782">
    <property type="entry name" value="Porphobilinogen deaminase (hydroxymethylbilane synthase), C-terminal domain"/>
    <property type="match status" value="1"/>
</dbReference>
<dbReference type="PROSITE" id="PS00533">
    <property type="entry name" value="PORPHOBILINOGEN_DEAM"/>
    <property type="match status" value="1"/>
</dbReference>
<proteinExistence type="inferred from homology"/>
<evidence type="ECO:0000250" key="1"/>
<evidence type="ECO:0000305" key="2"/>
<name>HEM3_PAEMA</name>
<protein>
    <recommendedName>
        <fullName>Porphobilinogen deaminase</fullName>
        <shortName>PBG</shortName>
        <ecNumber>2.5.1.61</ecNumber>
    </recommendedName>
    <alternativeName>
        <fullName>Hydroxymethylbilane synthase</fullName>
        <shortName>HMBS</shortName>
    </alternativeName>
    <alternativeName>
        <fullName>Pre-uroporphyrinogen synthase</fullName>
    </alternativeName>
</protein>
<feature type="chain" id="PRO_0000142966" description="Porphobilinogen deaminase">
    <location>
        <begin position="1"/>
        <end position="324"/>
    </location>
</feature>
<feature type="region of interest" description="Insert">
    <location>
        <begin position="261"/>
        <end position="279"/>
    </location>
</feature>
<feature type="modified residue" description="S-(dipyrrolylmethanemethyl)cysteine" evidence="1">
    <location>
        <position position="246"/>
    </location>
</feature>
<gene>
    <name type="primary">hemC</name>
</gene>